<sequence>MRILIILSIILCSFFARADLEYIDNDIYNYNGGRNENGCLEVYDPYEKFNRKVFAFNSVLDHIILRPLAVGYKNITNDYIKARVNSFVSNVYTPLTAVNYGLQLNYDKTIKSVWRFLINTTLGIGGLFDVASKVGLQSDRQTFGSTLAHYGVAPGPYLVLPIIGSTNARDMTDSVITNYAINPLMYYTHNDFDLGILAISKITDRYVVLPFSDYVMKNSTDPYVAIRSALHRTREASVQYPENFKCPKPKN</sequence>
<feature type="signal peptide" evidence="1">
    <location>
        <begin position="1"/>
        <end position="18"/>
    </location>
</feature>
<feature type="chain" id="PRO_0000263038" description="Uncharacterized protein RT0044">
    <location>
        <begin position="19"/>
        <end position="251"/>
    </location>
</feature>
<organism>
    <name type="scientific">Rickettsia typhi (strain ATCC VR-144 / Wilmington)</name>
    <dbReference type="NCBI Taxonomy" id="257363"/>
    <lineage>
        <taxon>Bacteria</taxon>
        <taxon>Pseudomonadati</taxon>
        <taxon>Pseudomonadota</taxon>
        <taxon>Alphaproteobacteria</taxon>
        <taxon>Rickettsiales</taxon>
        <taxon>Rickettsiaceae</taxon>
        <taxon>Rickettsieae</taxon>
        <taxon>Rickettsia</taxon>
        <taxon>typhus group</taxon>
    </lineage>
</organism>
<proteinExistence type="inferred from homology"/>
<reference key="1">
    <citation type="journal article" date="2004" name="J. Bacteriol.">
        <title>Complete genome sequence of Rickettsia typhi and comparison with sequences of other Rickettsiae.</title>
        <authorList>
            <person name="McLeod M.P."/>
            <person name="Qin X."/>
            <person name="Karpathy S.E."/>
            <person name="Gioia J."/>
            <person name="Highlander S.K."/>
            <person name="Fox G.E."/>
            <person name="McNeill T.Z."/>
            <person name="Jiang H."/>
            <person name="Muzny D."/>
            <person name="Jacob L.S."/>
            <person name="Hawes A.C."/>
            <person name="Sodergren E."/>
            <person name="Gill R."/>
            <person name="Hume J."/>
            <person name="Morgan M."/>
            <person name="Fan G."/>
            <person name="Amin A.G."/>
            <person name="Gibbs R.A."/>
            <person name="Hong C."/>
            <person name="Yu X.-J."/>
            <person name="Walker D.H."/>
            <person name="Weinstock G.M."/>
        </authorList>
    </citation>
    <scope>NUCLEOTIDE SEQUENCE [LARGE SCALE GENOMIC DNA]</scope>
    <source>
        <strain>ATCC VR-144 / Wilmington</strain>
    </source>
</reference>
<evidence type="ECO:0000255" key="1"/>
<evidence type="ECO:0000305" key="2"/>
<dbReference type="EMBL" id="AE017197">
    <property type="protein sequence ID" value="AAU03531.1"/>
    <property type="molecule type" value="Genomic_DNA"/>
</dbReference>
<dbReference type="RefSeq" id="WP_011190518.1">
    <property type="nucleotide sequence ID" value="NC_006142.1"/>
</dbReference>
<dbReference type="SMR" id="Q68XW1"/>
<dbReference type="KEGG" id="rty:RT0044"/>
<dbReference type="eggNOG" id="COG2853">
    <property type="taxonomic scope" value="Bacteria"/>
</dbReference>
<dbReference type="HOGENOM" id="CLU_059326_2_2_5"/>
<dbReference type="OrthoDB" id="9785326at2"/>
<dbReference type="Proteomes" id="UP000000604">
    <property type="component" value="Chromosome"/>
</dbReference>
<dbReference type="GO" id="GO:0016020">
    <property type="term" value="C:membrane"/>
    <property type="evidence" value="ECO:0007669"/>
    <property type="project" value="InterPro"/>
</dbReference>
<dbReference type="GO" id="GO:0120010">
    <property type="term" value="P:intermembrane phospholipid transfer"/>
    <property type="evidence" value="ECO:0007669"/>
    <property type="project" value="TreeGrafter"/>
</dbReference>
<dbReference type="InterPro" id="IPR007428">
    <property type="entry name" value="MlaA"/>
</dbReference>
<dbReference type="PANTHER" id="PTHR30035:SF3">
    <property type="entry name" value="INTERMEMBRANE PHOSPHOLIPID TRANSPORT SYSTEM LIPOPROTEIN MLAA"/>
    <property type="match status" value="1"/>
</dbReference>
<dbReference type="PANTHER" id="PTHR30035">
    <property type="entry name" value="LIPOPROTEIN VACJ-RELATED"/>
    <property type="match status" value="1"/>
</dbReference>
<dbReference type="Pfam" id="PF04333">
    <property type="entry name" value="MlaA"/>
    <property type="match status" value="1"/>
</dbReference>
<dbReference type="PRINTS" id="PR01805">
    <property type="entry name" value="VACJLIPOPROT"/>
</dbReference>
<comment type="similarity">
    <text evidence="2">Belongs to the MlaA family.</text>
</comment>
<gene>
    <name type="ordered locus">RT0044</name>
</gene>
<protein>
    <recommendedName>
        <fullName>Uncharacterized protein RT0044</fullName>
    </recommendedName>
</protein>
<name>Y044_RICTY</name>
<keyword id="KW-0732">Signal</keyword>
<accession>Q68XW1</accession>